<gene>
    <name type="primary">CDKN2AIP</name>
    <name type="synonym">CARF</name>
</gene>
<accession>Q9NXV6</accession>
<accession>Q8TBM5</accession>
<accession>Q9NYH0</accession>
<proteinExistence type="evidence at protein level"/>
<evidence type="ECO:0000250" key="1">
    <source>
        <dbReference type="UniProtKB" id="Q8BI72"/>
    </source>
</evidence>
<evidence type="ECO:0000255" key="2">
    <source>
        <dbReference type="PROSITE-ProRule" id="PRU00266"/>
    </source>
</evidence>
<evidence type="ECO:0000255" key="3">
    <source>
        <dbReference type="PROSITE-ProRule" id="PRU01171"/>
    </source>
</evidence>
<evidence type="ECO:0000256" key="4">
    <source>
        <dbReference type="SAM" id="MobiDB-lite"/>
    </source>
</evidence>
<evidence type="ECO:0000269" key="5">
    <source>
    </source>
</evidence>
<evidence type="ECO:0000269" key="6">
    <source>
    </source>
</evidence>
<evidence type="ECO:0000269" key="7">
    <source>
    </source>
</evidence>
<evidence type="ECO:0000269" key="8">
    <source>
    </source>
</evidence>
<evidence type="ECO:0000269" key="9">
    <source>
    </source>
</evidence>
<evidence type="ECO:0000269" key="10">
    <source>
    </source>
</evidence>
<evidence type="ECO:0000269" key="11">
    <source>
    </source>
</evidence>
<evidence type="ECO:0000269" key="12">
    <source ref="5"/>
</evidence>
<evidence type="ECO:0000305" key="13"/>
<evidence type="ECO:0007744" key="14">
    <source>
    </source>
</evidence>
<evidence type="ECO:0007744" key="15">
    <source>
    </source>
</evidence>
<evidence type="ECO:0007744" key="16">
    <source>
    </source>
</evidence>
<evidence type="ECO:0007744" key="17">
    <source>
    </source>
</evidence>
<evidence type="ECO:0007744" key="18">
    <source>
    </source>
</evidence>
<evidence type="ECO:0007744" key="19">
    <source>
    </source>
</evidence>
<keyword id="KW-0007">Acetylation</keyword>
<keyword id="KW-0903">Direct protein sequencing</keyword>
<keyword id="KW-1017">Isopeptide bond</keyword>
<keyword id="KW-0539">Nucleus</keyword>
<keyword id="KW-0597">Phosphoprotein</keyword>
<keyword id="KW-1267">Proteomics identification</keyword>
<keyword id="KW-1185">Reference proteome</keyword>
<keyword id="KW-0694">RNA-binding</keyword>
<keyword id="KW-0832">Ubl conjugation</keyword>
<protein>
    <recommendedName>
        <fullName>CDKN2A-interacting protein</fullName>
    </recommendedName>
    <alternativeName>
        <fullName>Collaborator of ARF</fullName>
    </alternativeName>
</protein>
<feature type="initiator methionine" description="Removed" evidence="12 17">
    <location>
        <position position="1"/>
    </location>
</feature>
<feature type="chain" id="PRO_0000324339" description="CDKN2A-interacting protein">
    <location>
        <begin position="2"/>
        <end position="580"/>
    </location>
</feature>
<feature type="domain" description="XRN2-binding (XTBD)" evidence="3">
    <location>
        <begin position="19"/>
        <end position="133"/>
    </location>
</feature>
<feature type="domain" description="DRBM" evidence="2">
    <location>
        <begin position="462"/>
        <end position="537"/>
    </location>
</feature>
<feature type="region of interest" description="Disordered" evidence="4">
    <location>
        <begin position="129"/>
        <end position="356"/>
    </location>
</feature>
<feature type="compositionally biased region" description="Basic and acidic residues" evidence="4">
    <location>
        <begin position="155"/>
        <end position="167"/>
    </location>
</feature>
<feature type="compositionally biased region" description="Polar residues" evidence="4">
    <location>
        <begin position="168"/>
        <end position="179"/>
    </location>
</feature>
<feature type="compositionally biased region" description="Low complexity" evidence="4">
    <location>
        <begin position="185"/>
        <end position="228"/>
    </location>
</feature>
<feature type="compositionally biased region" description="Basic and acidic residues" evidence="4">
    <location>
        <begin position="231"/>
        <end position="240"/>
    </location>
</feature>
<feature type="compositionally biased region" description="Polar residues" evidence="4">
    <location>
        <begin position="248"/>
        <end position="269"/>
    </location>
</feature>
<feature type="compositionally biased region" description="Low complexity" evidence="4">
    <location>
        <begin position="274"/>
        <end position="313"/>
    </location>
</feature>
<feature type="compositionally biased region" description="Low complexity" evidence="4">
    <location>
        <begin position="321"/>
        <end position="356"/>
    </location>
</feature>
<feature type="modified residue" description="N-acetylalanine" evidence="12 17">
    <location>
        <position position="2"/>
    </location>
</feature>
<feature type="modified residue" description="Phosphoserine" evidence="16 18">
    <location>
        <position position="131"/>
    </location>
</feature>
<feature type="modified residue" description="Phosphoserine" evidence="1">
    <location>
        <position position="241"/>
    </location>
</feature>
<feature type="modified residue" description="Phosphothreonine" evidence="14 15 18">
    <location>
        <position position="346"/>
    </location>
</feature>
<feature type="modified residue" description="Phosphoserine" evidence="18">
    <location>
        <position position="389"/>
    </location>
</feature>
<feature type="cross-link" description="Glycyl lysine isopeptide (Lys-Gly) (interchain with G-Cter in SUMO1)" evidence="19">
    <location>
        <position position="184"/>
    </location>
</feature>
<feature type="sequence conflict" description="In Ref. 3; EAX04691 and 4; AAH22270." evidence="13" ref="3 4">
    <location>
        <position position="242"/>
    </location>
</feature>
<organism>
    <name type="scientific">Homo sapiens</name>
    <name type="common">Human</name>
    <dbReference type="NCBI Taxonomy" id="9606"/>
    <lineage>
        <taxon>Eukaryota</taxon>
        <taxon>Metazoa</taxon>
        <taxon>Chordata</taxon>
        <taxon>Craniata</taxon>
        <taxon>Vertebrata</taxon>
        <taxon>Euteleostomi</taxon>
        <taxon>Mammalia</taxon>
        <taxon>Eutheria</taxon>
        <taxon>Euarchontoglires</taxon>
        <taxon>Primates</taxon>
        <taxon>Haplorrhini</taxon>
        <taxon>Catarrhini</taxon>
        <taxon>Hominidae</taxon>
        <taxon>Homo</taxon>
    </lineage>
</organism>
<dbReference type="EMBL" id="AF246705">
    <property type="protein sequence ID" value="AAF68967.1"/>
    <property type="status" value="ALT_FRAME"/>
    <property type="molecule type" value="mRNA"/>
</dbReference>
<dbReference type="EMBL" id="AK000043">
    <property type="protein sequence ID" value="BAA90902.1"/>
    <property type="molecule type" value="mRNA"/>
</dbReference>
<dbReference type="EMBL" id="CH471056">
    <property type="protein sequence ID" value="EAX04691.1"/>
    <property type="molecule type" value="Genomic_DNA"/>
</dbReference>
<dbReference type="EMBL" id="BC022270">
    <property type="protein sequence ID" value="AAH22270.1"/>
    <property type="molecule type" value="mRNA"/>
</dbReference>
<dbReference type="CCDS" id="CCDS34110.1"/>
<dbReference type="RefSeq" id="NP_001304272.1">
    <property type="nucleotide sequence ID" value="NM_001317343.1"/>
</dbReference>
<dbReference type="RefSeq" id="NP_060102.1">
    <property type="nucleotide sequence ID" value="NM_017632.4"/>
</dbReference>
<dbReference type="SMR" id="Q9NXV6"/>
<dbReference type="BioGRID" id="120743">
    <property type="interactions" value="156"/>
</dbReference>
<dbReference type="DIP" id="DIP-24170N"/>
<dbReference type="FunCoup" id="Q9NXV6">
    <property type="interactions" value="2994"/>
</dbReference>
<dbReference type="IntAct" id="Q9NXV6">
    <property type="interactions" value="103"/>
</dbReference>
<dbReference type="MINT" id="Q9NXV6"/>
<dbReference type="STRING" id="9606.ENSP00000427108"/>
<dbReference type="GlyConnect" id="2902">
    <property type="glycosylation" value="1 O-GlcNAc glycan (3 sites)"/>
</dbReference>
<dbReference type="GlyCosmos" id="Q9NXV6">
    <property type="glycosylation" value="22 sites, 2 glycans"/>
</dbReference>
<dbReference type="GlyGen" id="Q9NXV6">
    <property type="glycosylation" value="37 sites, 1 N-linked glycan (1 site), 2 O-linked glycans (36 sites)"/>
</dbReference>
<dbReference type="iPTMnet" id="Q9NXV6"/>
<dbReference type="PhosphoSitePlus" id="Q9NXV6"/>
<dbReference type="SwissPalm" id="Q9NXV6"/>
<dbReference type="BioMuta" id="CDKN2AIP"/>
<dbReference type="DMDM" id="327478591"/>
<dbReference type="jPOST" id="Q9NXV6"/>
<dbReference type="MassIVE" id="Q9NXV6"/>
<dbReference type="PaxDb" id="9606-ENSP00000427108"/>
<dbReference type="PeptideAtlas" id="Q9NXV6"/>
<dbReference type="ProteomicsDB" id="83138"/>
<dbReference type="Pumba" id="Q9NXV6"/>
<dbReference type="Antibodypedia" id="17295">
    <property type="antibodies" value="222 antibodies from 32 providers"/>
</dbReference>
<dbReference type="DNASU" id="55602"/>
<dbReference type="Ensembl" id="ENST00000504169.2">
    <property type="protein sequence ID" value="ENSP00000427108.1"/>
    <property type="gene ID" value="ENSG00000168564.6"/>
</dbReference>
<dbReference type="GeneID" id="55602"/>
<dbReference type="KEGG" id="hsa:55602"/>
<dbReference type="MANE-Select" id="ENST00000504169.2">
    <property type="protein sequence ID" value="ENSP00000427108.1"/>
    <property type="RefSeq nucleotide sequence ID" value="NM_017632.4"/>
    <property type="RefSeq protein sequence ID" value="NP_060102.1"/>
</dbReference>
<dbReference type="UCSC" id="uc003ivp.2">
    <property type="organism name" value="human"/>
</dbReference>
<dbReference type="AGR" id="HGNC:24325"/>
<dbReference type="CTD" id="55602"/>
<dbReference type="DisGeNET" id="55602"/>
<dbReference type="GeneCards" id="CDKN2AIP"/>
<dbReference type="HGNC" id="HGNC:24325">
    <property type="gene designation" value="CDKN2AIP"/>
</dbReference>
<dbReference type="HPA" id="ENSG00000168564">
    <property type="expression patterns" value="Low tissue specificity"/>
</dbReference>
<dbReference type="MalaCards" id="CDKN2AIP"/>
<dbReference type="MIM" id="615914">
    <property type="type" value="gene"/>
</dbReference>
<dbReference type="neXtProt" id="NX_Q9NXV6"/>
<dbReference type="OpenTargets" id="ENSG00000168564"/>
<dbReference type="PharmGKB" id="PA162382149"/>
<dbReference type="VEuPathDB" id="HostDB:ENSG00000168564"/>
<dbReference type="eggNOG" id="ENOG502S4FT">
    <property type="taxonomic scope" value="Eukaryota"/>
</dbReference>
<dbReference type="GeneTree" id="ENSGT00940000158376"/>
<dbReference type="HOGENOM" id="CLU_019689_0_0_1"/>
<dbReference type="InParanoid" id="Q9NXV6"/>
<dbReference type="OMA" id="PNMAQEV"/>
<dbReference type="OrthoDB" id="2359216at2759"/>
<dbReference type="PAN-GO" id="Q9NXV6">
    <property type="GO annotations" value="2 GO annotations based on evolutionary models"/>
</dbReference>
<dbReference type="PhylomeDB" id="Q9NXV6"/>
<dbReference type="TreeFam" id="TF333807"/>
<dbReference type="PathwayCommons" id="Q9NXV6"/>
<dbReference type="SignaLink" id="Q9NXV6"/>
<dbReference type="SIGNOR" id="Q9NXV6"/>
<dbReference type="BioGRID-ORCS" id="55602">
    <property type="hits" value="49 hits in 1161 CRISPR screens"/>
</dbReference>
<dbReference type="CD-CODE" id="91857CE7">
    <property type="entry name" value="Nucleolus"/>
</dbReference>
<dbReference type="ChiTaRS" id="CDKN2AIP">
    <property type="organism name" value="human"/>
</dbReference>
<dbReference type="GenomeRNAi" id="55602"/>
<dbReference type="Pharos" id="Q9NXV6">
    <property type="development level" value="Tbio"/>
</dbReference>
<dbReference type="PRO" id="PR:Q9NXV6"/>
<dbReference type="Proteomes" id="UP000005640">
    <property type="component" value="Chromosome 4"/>
</dbReference>
<dbReference type="RNAct" id="Q9NXV6">
    <property type="molecule type" value="protein"/>
</dbReference>
<dbReference type="Bgee" id="ENSG00000168564">
    <property type="expression patterns" value="Expressed in amniotic fluid and 190 other cell types or tissues"/>
</dbReference>
<dbReference type="ExpressionAtlas" id="Q9NXV6">
    <property type="expression patterns" value="baseline and differential"/>
</dbReference>
<dbReference type="GO" id="GO:0001652">
    <property type="term" value="C:granular component"/>
    <property type="evidence" value="ECO:0000314"/>
    <property type="project" value="BHF-UCL"/>
</dbReference>
<dbReference type="GO" id="GO:0005730">
    <property type="term" value="C:nucleolus"/>
    <property type="evidence" value="ECO:0000314"/>
    <property type="project" value="BHF-UCL"/>
</dbReference>
<dbReference type="GO" id="GO:0005654">
    <property type="term" value="C:nucleoplasm"/>
    <property type="evidence" value="ECO:0000314"/>
    <property type="project" value="BHF-UCL"/>
</dbReference>
<dbReference type="GO" id="GO:0002039">
    <property type="term" value="F:p53 binding"/>
    <property type="evidence" value="ECO:0000314"/>
    <property type="project" value="BHF-UCL"/>
</dbReference>
<dbReference type="GO" id="GO:0003723">
    <property type="term" value="F:RNA binding"/>
    <property type="evidence" value="ECO:0007669"/>
    <property type="project" value="UniProtKB-KW"/>
</dbReference>
<dbReference type="GO" id="GO:0006974">
    <property type="term" value="P:DNA damage response"/>
    <property type="evidence" value="ECO:0000314"/>
    <property type="project" value="UniProtKB"/>
</dbReference>
<dbReference type="GO" id="GO:0030308">
    <property type="term" value="P:negative regulation of cell growth"/>
    <property type="evidence" value="ECO:0000315"/>
    <property type="project" value="BHF-UCL"/>
</dbReference>
<dbReference type="GO" id="GO:0030307">
    <property type="term" value="P:positive regulation of cell growth"/>
    <property type="evidence" value="ECO:0000315"/>
    <property type="project" value="UniProtKB"/>
</dbReference>
<dbReference type="GO" id="GO:0009967">
    <property type="term" value="P:positive regulation of signal transduction"/>
    <property type="evidence" value="ECO:0000315"/>
    <property type="project" value="BHF-UCL"/>
</dbReference>
<dbReference type="GO" id="GO:0031647">
    <property type="term" value="P:regulation of protein stability"/>
    <property type="evidence" value="ECO:0000315"/>
    <property type="project" value="BHF-UCL"/>
</dbReference>
<dbReference type="InterPro" id="IPR014720">
    <property type="entry name" value="dsRBD_dom"/>
</dbReference>
<dbReference type="InterPro" id="IPR021859">
    <property type="entry name" value="XTBD"/>
</dbReference>
<dbReference type="PANTHER" id="PTHR16148:SF11">
    <property type="entry name" value="CDKN2A-INTERACTING PROTEIN"/>
    <property type="match status" value="1"/>
</dbReference>
<dbReference type="PANTHER" id="PTHR16148">
    <property type="entry name" value="NF-KAPPA-B-REPRESSING FACTOR-RELATED"/>
    <property type="match status" value="1"/>
</dbReference>
<dbReference type="Pfam" id="PF11952">
    <property type="entry name" value="XTBD"/>
    <property type="match status" value="1"/>
</dbReference>
<dbReference type="PROSITE" id="PS50137">
    <property type="entry name" value="DS_RBD"/>
    <property type="match status" value="1"/>
</dbReference>
<dbReference type="PROSITE" id="PS51827">
    <property type="entry name" value="XTBD"/>
    <property type="match status" value="1"/>
</dbReference>
<comment type="function">
    <text evidence="7 11">Regulates DNA damage response in a dose-dependent manner through a number of signaling pathways involved in cell proliferation, apoptosis and senescence.</text>
</comment>
<comment type="subunit">
    <text evidence="5 6 7 8 9 11">Interacts with CDKN2A/p14ARF, p53/TP53 and MDM2. Interacts with CHEK2 and MAPK3. Interacts with XRN2 (PubMed:24462208).</text>
</comment>
<comment type="interaction">
    <interactant intactId="EBI-2559836">
        <id>Q9NXV6</id>
    </interactant>
    <interactant intactId="EBI-372110">
        <id>Q9H0D6</id>
        <label>XRN2</label>
    </interactant>
    <organismsDiffer>false</organismsDiffer>
    <experiments>7</experiments>
</comment>
<comment type="subcellular location">
    <subcellularLocation>
        <location evidence="5 6">Nucleus</location>
        <location evidence="5 6">Nucleoplasm</location>
    </subcellularLocation>
</comment>
<comment type="tissue specificity">
    <text evidence="6">Ubiquitously expressed.</text>
</comment>
<comment type="induction">
    <text evidence="10">Up-regulated during replicative senescence, in response to DNA-damaging drugs, telomere unprotection and oncogenic Ras-induced stress. Induced by proteasomal inhibitor MG132. Up-regulated at G1 and G2 stages of cell cycle.</text>
</comment>
<comment type="PTM">
    <text>May be ubiquitinated.</text>
</comment>
<comment type="similarity">
    <text evidence="13">Belongs to the CARF family.</text>
</comment>
<comment type="sequence caution" evidence="13">
    <conflict type="frameshift">
        <sequence resource="EMBL-CDS" id="AAF68967"/>
    </conflict>
</comment>
<name>CARF_HUMAN</name>
<sequence>MAQEVSEYLSQNPRVAAWVEALRCDGETDKHWRHRRDFLLRNAGDLAPAGGAASASTDEAADAESGTRNRQLQQLISFSMAWANHVFLGCRYPQKVMDKILSMAEGIKVTDAPTYTTRDELVAKVKKRGISSSNEGVEEPSKKRVIEGKNSSAVEQDHAKTSAKTERASAQQENSSTCIGSAIKSESGNSARSSGISSQNSSTSDGDRSVSSQSSSSVSSQVTTAGSGKASEAEAPDKHGSASFVSLLKSSVNSHMTQSTDSRQQSGSPKKSALEGSSASASQSSSEIEVPLLGSSGSSEVELPLLSSKPSSETASSGLTSKTSSEASVSSSVAKNSSSSGTSLLTPKSSSSTNTSLLTSKSTSQVAASLLASKSSSQTSGSLVSKSTSLASVSQLASKSSSQTSTSQLPSKSTSQSSESSVKFSCKLTNEDVKQKQPFFNRLYKTVAWKLVAVGGFSPNVNHGELLNAAIEALKATLDVFFVPLKELADLPQNKSSQESIVCELRCKSVYLGTGCGKSKENAKAVASREALKLFLKKKVVVKICKRKYRGSEIEDLVLLDEESRPVNLPPALKHPQELL</sequence>
<reference key="1">
    <citation type="journal article" date="2002" name="J. Biol. Chem.">
        <title>CARF is a novel protein that cooperates with mouse p19ARF (human p14ARF) in activating p53.</title>
        <authorList>
            <person name="Hasan M.K."/>
            <person name="Yaguchi T."/>
            <person name="Sugihara T."/>
            <person name="Kumar P.K.R."/>
            <person name="Taira K."/>
            <person name="Reddel R.R."/>
            <person name="Kaul S.C."/>
            <person name="Wadhwa R."/>
        </authorList>
    </citation>
    <scope>NUCLEOTIDE SEQUENCE [MRNA]</scope>
    <scope>INTERACTION WITH CDKN2A</scope>
    <scope>SUBCELLULAR LOCATION</scope>
</reference>
<reference key="2">
    <citation type="journal article" date="2004" name="Nat. Genet.">
        <title>Complete sequencing and characterization of 21,243 full-length human cDNAs.</title>
        <authorList>
            <person name="Ota T."/>
            <person name="Suzuki Y."/>
            <person name="Nishikawa T."/>
            <person name="Otsuki T."/>
            <person name="Sugiyama T."/>
            <person name="Irie R."/>
            <person name="Wakamatsu A."/>
            <person name="Hayashi K."/>
            <person name="Sato H."/>
            <person name="Nagai K."/>
            <person name="Kimura K."/>
            <person name="Makita H."/>
            <person name="Sekine M."/>
            <person name="Obayashi M."/>
            <person name="Nishi T."/>
            <person name="Shibahara T."/>
            <person name="Tanaka T."/>
            <person name="Ishii S."/>
            <person name="Yamamoto J."/>
            <person name="Saito K."/>
            <person name="Kawai Y."/>
            <person name="Isono Y."/>
            <person name="Nakamura Y."/>
            <person name="Nagahari K."/>
            <person name="Murakami K."/>
            <person name="Yasuda T."/>
            <person name="Iwayanagi T."/>
            <person name="Wagatsuma M."/>
            <person name="Shiratori A."/>
            <person name="Sudo H."/>
            <person name="Hosoiri T."/>
            <person name="Kaku Y."/>
            <person name="Kodaira H."/>
            <person name="Kondo H."/>
            <person name="Sugawara M."/>
            <person name="Takahashi M."/>
            <person name="Kanda K."/>
            <person name="Yokoi T."/>
            <person name="Furuya T."/>
            <person name="Kikkawa E."/>
            <person name="Omura Y."/>
            <person name="Abe K."/>
            <person name="Kamihara K."/>
            <person name="Katsuta N."/>
            <person name="Sato K."/>
            <person name="Tanikawa M."/>
            <person name="Yamazaki M."/>
            <person name="Ninomiya K."/>
            <person name="Ishibashi T."/>
            <person name="Yamashita H."/>
            <person name="Murakawa K."/>
            <person name="Fujimori K."/>
            <person name="Tanai H."/>
            <person name="Kimata M."/>
            <person name="Watanabe M."/>
            <person name="Hiraoka S."/>
            <person name="Chiba Y."/>
            <person name="Ishida S."/>
            <person name="Ono Y."/>
            <person name="Takiguchi S."/>
            <person name="Watanabe S."/>
            <person name="Yosida M."/>
            <person name="Hotuta T."/>
            <person name="Kusano J."/>
            <person name="Kanehori K."/>
            <person name="Takahashi-Fujii A."/>
            <person name="Hara H."/>
            <person name="Tanase T.-O."/>
            <person name="Nomura Y."/>
            <person name="Togiya S."/>
            <person name="Komai F."/>
            <person name="Hara R."/>
            <person name="Takeuchi K."/>
            <person name="Arita M."/>
            <person name="Imose N."/>
            <person name="Musashino K."/>
            <person name="Yuuki H."/>
            <person name="Oshima A."/>
            <person name="Sasaki N."/>
            <person name="Aotsuka S."/>
            <person name="Yoshikawa Y."/>
            <person name="Matsunawa H."/>
            <person name="Ichihara T."/>
            <person name="Shiohata N."/>
            <person name="Sano S."/>
            <person name="Moriya S."/>
            <person name="Momiyama H."/>
            <person name="Satoh N."/>
            <person name="Takami S."/>
            <person name="Terashima Y."/>
            <person name="Suzuki O."/>
            <person name="Nakagawa S."/>
            <person name="Senoh A."/>
            <person name="Mizoguchi H."/>
            <person name="Goto Y."/>
            <person name="Shimizu F."/>
            <person name="Wakebe H."/>
            <person name="Hishigaki H."/>
            <person name="Watanabe T."/>
            <person name="Sugiyama A."/>
            <person name="Takemoto M."/>
            <person name="Kawakami B."/>
            <person name="Yamazaki M."/>
            <person name="Watanabe K."/>
            <person name="Kumagai A."/>
            <person name="Itakura S."/>
            <person name="Fukuzumi Y."/>
            <person name="Fujimori Y."/>
            <person name="Komiyama M."/>
            <person name="Tashiro H."/>
            <person name="Tanigami A."/>
            <person name="Fujiwara T."/>
            <person name="Ono T."/>
            <person name="Yamada K."/>
            <person name="Fujii Y."/>
            <person name="Ozaki K."/>
            <person name="Hirao M."/>
            <person name="Ohmori Y."/>
            <person name="Kawabata A."/>
            <person name="Hikiji T."/>
            <person name="Kobatake N."/>
            <person name="Inagaki H."/>
            <person name="Ikema Y."/>
            <person name="Okamoto S."/>
            <person name="Okitani R."/>
            <person name="Kawakami T."/>
            <person name="Noguchi S."/>
            <person name="Itoh T."/>
            <person name="Shigeta K."/>
            <person name="Senba T."/>
            <person name="Matsumura K."/>
            <person name="Nakajima Y."/>
            <person name="Mizuno T."/>
            <person name="Morinaga M."/>
            <person name="Sasaki M."/>
            <person name="Togashi T."/>
            <person name="Oyama M."/>
            <person name="Hata H."/>
            <person name="Watanabe M."/>
            <person name="Komatsu T."/>
            <person name="Mizushima-Sugano J."/>
            <person name="Satoh T."/>
            <person name="Shirai Y."/>
            <person name="Takahashi Y."/>
            <person name="Nakagawa K."/>
            <person name="Okumura K."/>
            <person name="Nagase T."/>
            <person name="Nomura N."/>
            <person name="Kikuchi H."/>
            <person name="Masuho Y."/>
            <person name="Yamashita R."/>
            <person name="Nakai K."/>
            <person name="Yada T."/>
            <person name="Nakamura Y."/>
            <person name="Ohara O."/>
            <person name="Isogai T."/>
            <person name="Sugano S."/>
        </authorList>
    </citation>
    <scope>NUCLEOTIDE SEQUENCE [LARGE SCALE MRNA]</scope>
    <source>
        <tissue>Colon</tissue>
    </source>
</reference>
<reference key="3">
    <citation type="submission" date="2005-09" db="EMBL/GenBank/DDBJ databases">
        <authorList>
            <person name="Mural R.J."/>
            <person name="Istrail S."/>
            <person name="Sutton G.G."/>
            <person name="Florea L."/>
            <person name="Halpern A.L."/>
            <person name="Mobarry C.M."/>
            <person name="Lippert R."/>
            <person name="Walenz B."/>
            <person name="Shatkay H."/>
            <person name="Dew I."/>
            <person name="Miller J.R."/>
            <person name="Flanigan M.J."/>
            <person name="Edwards N.J."/>
            <person name="Bolanos R."/>
            <person name="Fasulo D."/>
            <person name="Halldorsson B.V."/>
            <person name="Hannenhalli S."/>
            <person name="Turner R."/>
            <person name="Yooseph S."/>
            <person name="Lu F."/>
            <person name="Nusskern D.R."/>
            <person name="Shue B.C."/>
            <person name="Zheng X.H."/>
            <person name="Zhong F."/>
            <person name="Delcher A.L."/>
            <person name="Huson D.H."/>
            <person name="Kravitz S.A."/>
            <person name="Mouchard L."/>
            <person name="Reinert K."/>
            <person name="Remington K.A."/>
            <person name="Clark A.G."/>
            <person name="Waterman M.S."/>
            <person name="Eichler E.E."/>
            <person name="Adams M.D."/>
            <person name="Hunkapiller M.W."/>
            <person name="Myers E.W."/>
            <person name="Venter J.C."/>
        </authorList>
    </citation>
    <scope>NUCLEOTIDE SEQUENCE [LARGE SCALE GENOMIC DNA]</scope>
</reference>
<reference key="4">
    <citation type="journal article" date="2004" name="Genome Res.">
        <title>The status, quality, and expansion of the NIH full-length cDNA project: the Mammalian Gene Collection (MGC).</title>
        <authorList>
            <consortium name="The MGC Project Team"/>
        </authorList>
    </citation>
    <scope>NUCLEOTIDE SEQUENCE [LARGE SCALE MRNA]</scope>
    <source>
        <tissue>Testis</tissue>
    </source>
</reference>
<reference key="5">
    <citation type="submission" date="2009-06" db="UniProtKB">
        <authorList>
            <person name="Bienvenut W.V."/>
            <person name="Dozynkiewicz M."/>
            <person name="Norman J.C."/>
        </authorList>
    </citation>
    <scope>PROTEIN SEQUENCE OF 2-14; 42-68; 129-142 AND 209-229</scope>
    <scope>CLEAVAGE OF INITIATOR METHIONINE</scope>
    <scope>ACETYLATION AT ALA-2</scope>
    <scope>IDENTIFICATION BY MASS SPECTROMETRY</scope>
    <source>
        <tissue>Ovarian carcinoma</tissue>
    </source>
</reference>
<reference key="6">
    <citation type="journal article" date="2003" name="Exp. Gerontol.">
        <title>A novel putative collaborator of p19ARF.</title>
        <authorList>
            <person name="Wadhwa R."/>
            <person name="Sugihara T."/>
            <person name="Hasan M.K."/>
            <person name="Duncan E.L."/>
            <person name="Taira K."/>
            <person name="Kaul S.C."/>
        </authorList>
    </citation>
    <scope>TISSUE SPECIFICITY</scope>
    <scope>SUBCELLULAR LOCATION</scope>
    <scope>INTERACTION WITH CDKN2A</scope>
</reference>
<reference key="7">
    <citation type="journal article" date="2004" name="Biochem. J.">
        <title>Alternative reading frame protein (ARF)-independent function of CARF (collaborator of ARF) involves its interactions with p53: evidence for a novel p53-activation pathway and its negative feedback control.</title>
        <authorList>
            <person name="Hasan M.K."/>
            <person name="Yaguchi T."/>
            <person name="Minoda Y."/>
            <person name="Hirano T."/>
            <person name="Taira K."/>
            <person name="Wadhwa R."/>
            <person name="Kaul S.C."/>
        </authorList>
    </citation>
    <scope>INTERACTION WITH TP53</scope>
    <scope>FUNCTION</scope>
</reference>
<reference key="8">
    <citation type="journal article" date="2006" name="Nat. Biotechnol.">
        <title>A probability-based approach for high-throughput protein phosphorylation analysis and site localization.</title>
        <authorList>
            <person name="Beausoleil S.A."/>
            <person name="Villen J."/>
            <person name="Gerber S.A."/>
            <person name="Rush J."/>
            <person name="Gygi S.P."/>
        </authorList>
    </citation>
    <scope>PHOSPHORYLATION [LARGE SCALE ANALYSIS] AT THR-346</scope>
    <scope>IDENTIFICATION BY MASS SPECTROMETRY [LARGE SCALE ANALYSIS]</scope>
    <source>
        <tissue>Cervix carcinoma</tissue>
    </source>
</reference>
<reference key="9">
    <citation type="journal article" date="2007" name="Ann. N. Y. Acad. Sci.">
        <title>CARF binds to three members (ARF, p53, and HDM2) of the p53 tumor-suppressor pathway.</title>
        <authorList>
            <person name="Kamrul H.M."/>
            <person name="Wadhwa R."/>
            <person name="Kaul S.C."/>
        </authorList>
    </citation>
    <scope>INTERACTION WITH MDM2</scope>
</reference>
<reference key="10">
    <citation type="journal article" date="2008" name="Proc. Natl. Acad. Sci. U.S.A.">
        <title>A quantitative atlas of mitotic phosphorylation.</title>
        <authorList>
            <person name="Dephoure N."/>
            <person name="Zhou C."/>
            <person name="Villen J."/>
            <person name="Beausoleil S.A."/>
            <person name="Bakalarski C.E."/>
            <person name="Elledge S.J."/>
            <person name="Gygi S.P."/>
        </authorList>
    </citation>
    <scope>PHOSPHORYLATION [LARGE SCALE ANALYSIS] AT THR-346</scope>
    <scope>IDENTIFICATION BY MASS SPECTROMETRY [LARGE SCALE ANALYSIS]</scope>
    <source>
        <tissue>Cervix carcinoma</tissue>
    </source>
</reference>
<reference key="11">
    <citation type="journal article" date="2009" name="Sci. Signal.">
        <title>Quantitative phosphoproteomic analysis of T cell receptor signaling reveals system-wide modulation of protein-protein interactions.</title>
        <authorList>
            <person name="Mayya V."/>
            <person name="Lundgren D.H."/>
            <person name="Hwang S.-I."/>
            <person name="Rezaul K."/>
            <person name="Wu L."/>
            <person name="Eng J.K."/>
            <person name="Rodionov V."/>
            <person name="Han D.K."/>
        </authorList>
    </citation>
    <scope>PHOSPHORYLATION [LARGE SCALE ANALYSIS] AT SER-131</scope>
    <scope>IDENTIFICATION BY MASS SPECTROMETRY [LARGE SCALE ANALYSIS]</scope>
    <source>
        <tissue>Leukemic T-cell</tissue>
    </source>
</reference>
<reference key="12">
    <citation type="journal article" date="2011" name="BMC Syst. Biol.">
        <title>Initial characterization of the human central proteome.</title>
        <authorList>
            <person name="Burkard T.R."/>
            <person name="Planyavsky M."/>
            <person name="Kaupe I."/>
            <person name="Breitwieser F.P."/>
            <person name="Buerckstuemmer T."/>
            <person name="Bennett K.L."/>
            <person name="Superti-Furga G."/>
            <person name="Colinge J."/>
        </authorList>
    </citation>
    <scope>IDENTIFICATION BY MASS SPECTROMETRY [LARGE SCALE ANALYSIS]</scope>
</reference>
<reference key="13">
    <citation type="journal article" date="2012" name="Proc. Natl. Acad. Sci. U.S.A.">
        <title>N-terminal acetylome analyses and functional insights of the N-terminal acetyltransferase NatB.</title>
        <authorList>
            <person name="Van Damme P."/>
            <person name="Lasa M."/>
            <person name="Polevoda B."/>
            <person name="Gazquez C."/>
            <person name="Elosegui-Artola A."/>
            <person name="Kim D.S."/>
            <person name="De Juan-Pardo E."/>
            <person name="Demeyer K."/>
            <person name="Hole K."/>
            <person name="Larrea E."/>
            <person name="Timmerman E."/>
            <person name="Prieto J."/>
            <person name="Arnesen T."/>
            <person name="Sherman F."/>
            <person name="Gevaert K."/>
            <person name="Aldabe R."/>
        </authorList>
    </citation>
    <scope>ACETYLATION [LARGE SCALE ANALYSIS] AT ALA-2</scope>
    <scope>CLEAVAGE OF INITIATOR METHIONINE [LARGE SCALE ANALYSIS]</scope>
    <scope>IDENTIFICATION BY MASS SPECTROMETRY [LARGE SCALE ANALYSIS]</scope>
</reference>
<reference key="14">
    <citation type="journal article" date="2013" name="J. Proteome Res.">
        <title>Toward a comprehensive characterization of a human cancer cell phosphoproteome.</title>
        <authorList>
            <person name="Zhou H."/>
            <person name="Di Palma S."/>
            <person name="Preisinger C."/>
            <person name="Peng M."/>
            <person name="Polat A.N."/>
            <person name="Heck A.J."/>
            <person name="Mohammed S."/>
        </authorList>
    </citation>
    <scope>PHOSPHORYLATION [LARGE SCALE ANALYSIS] AT SER-131; THR-346 AND SER-389</scope>
    <scope>IDENTIFICATION BY MASS SPECTROMETRY [LARGE SCALE ANALYSIS]</scope>
    <source>
        <tissue>Cervix carcinoma</tissue>
        <tissue>Erythroleukemia</tissue>
    </source>
</reference>
<reference key="15">
    <citation type="journal article" date="2014" name="Exp. Cell Res.">
        <title>Molecular characterization of collaborator of ARF (CARF) as a DNA damage response and cell cycle checkpoint regulatory protein.</title>
        <authorList>
            <person name="Singh R."/>
            <person name="Kalra R.S."/>
            <person name="Hasan K."/>
            <person name="Kaul Z."/>
            <person name="Cheung C.T."/>
            <person name="Huschtscha L."/>
            <person name="Reddel R.R."/>
            <person name="Kaul S.C."/>
            <person name="Wadhwa R."/>
        </authorList>
    </citation>
    <scope>INDUCTION</scope>
</reference>
<reference key="16">
    <citation type="journal article" date="2014" name="J. Biol. Chem.">
        <title>Collaborator of ARF (CARF) regulates proliferative fate of human cells by dose-dependent regulation of DNA damage signaling.</title>
        <authorList>
            <person name="Cheung C.T."/>
            <person name="Singh R."/>
            <person name="Kalra R.S."/>
            <person name="Kaul S.C."/>
            <person name="Wadhwa R."/>
        </authorList>
    </citation>
    <scope>FUNCTION</scope>
    <scope>INTERACTION WITH CHEK2 AND MAPK3</scope>
</reference>
<reference key="17">
    <citation type="journal article" date="2014" name="J. Proteomics">
        <title>An enzyme assisted RP-RPLC approach for in-depth analysis of human liver phosphoproteome.</title>
        <authorList>
            <person name="Bian Y."/>
            <person name="Song C."/>
            <person name="Cheng K."/>
            <person name="Dong M."/>
            <person name="Wang F."/>
            <person name="Huang J."/>
            <person name="Sun D."/>
            <person name="Wang L."/>
            <person name="Ye M."/>
            <person name="Zou H."/>
        </authorList>
    </citation>
    <scope>IDENTIFICATION BY MASS SPECTROMETRY [LARGE SCALE ANALYSIS]</scope>
    <source>
        <tissue>Liver</tissue>
    </source>
</reference>
<reference key="18">
    <citation type="journal article" date="2014" name="Mol. Cell">
        <title>PAXT-1 promotes XRN2 activity by stabilizing it through a conserved domain.</title>
        <authorList>
            <person name="Miki T.S."/>
            <person name="Richter H."/>
            <person name="Rueegger S."/>
            <person name="Grosshans H."/>
        </authorList>
    </citation>
    <scope>INTERACTION WITH XRN2</scope>
</reference>
<reference key="19">
    <citation type="journal article" date="2014" name="Proc. Natl. Acad. Sci. U.S.A.">
        <title>Mapping of SUMO sites and analysis of SUMOylation changes induced by external stimuli.</title>
        <authorList>
            <person name="Impens F."/>
            <person name="Radoshevich L."/>
            <person name="Cossart P."/>
            <person name="Ribet D."/>
        </authorList>
    </citation>
    <scope>SUMOYLATION [LARGE SCALE ANALYSIS] AT LYS-184</scope>
    <scope>IDENTIFICATION BY MASS SPECTROMETRY [LARGE SCALE ANALYSIS]</scope>
</reference>